<feature type="chain" id="PRO_1000082599" description="Glucose-1-phosphate adenylyltransferase">
    <location>
        <begin position="1"/>
        <end position="431"/>
    </location>
</feature>
<feature type="binding site" evidence="1">
    <location>
        <position position="39"/>
    </location>
    <ligand>
        <name>beta-D-fructose 1,6-bisphosphate</name>
        <dbReference type="ChEBI" id="CHEBI:32966"/>
    </ligand>
</feature>
<feature type="binding site" evidence="1">
    <location>
        <position position="40"/>
    </location>
    <ligand>
        <name>AMP</name>
        <dbReference type="ChEBI" id="CHEBI:456215"/>
    </ligand>
</feature>
<feature type="binding site" evidence="1">
    <location>
        <position position="46"/>
    </location>
    <ligand>
        <name>AMP</name>
        <dbReference type="ChEBI" id="CHEBI:456215"/>
    </ligand>
</feature>
<feature type="binding site" evidence="1">
    <location>
        <position position="52"/>
    </location>
    <ligand>
        <name>AMP</name>
        <dbReference type="ChEBI" id="CHEBI:456215"/>
    </ligand>
</feature>
<feature type="binding site" evidence="1">
    <location>
        <position position="114"/>
    </location>
    <ligand>
        <name>alpha-D-glucose 1-phosphate</name>
        <dbReference type="ChEBI" id="CHEBI:58601"/>
    </ligand>
</feature>
<feature type="binding site" evidence="1">
    <location>
        <position position="130"/>
    </location>
    <ligand>
        <name>AMP</name>
        <dbReference type="ChEBI" id="CHEBI:456215"/>
    </ligand>
</feature>
<feature type="binding site" evidence="1">
    <location>
        <position position="179"/>
    </location>
    <ligand>
        <name>alpha-D-glucose 1-phosphate</name>
        <dbReference type="ChEBI" id="CHEBI:58601"/>
    </ligand>
</feature>
<feature type="binding site" evidence="1">
    <location>
        <begin position="194"/>
        <end position="195"/>
    </location>
    <ligand>
        <name>alpha-D-glucose 1-phosphate</name>
        <dbReference type="ChEBI" id="CHEBI:58601"/>
    </ligand>
</feature>
<feature type="binding site" evidence="1">
    <location>
        <position position="212"/>
    </location>
    <ligand>
        <name>alpha-D-glucose 1-phosphate</name>
        <dbReference type="ChEBI" id="CHEBI:58601"/>
    </ligand>
</feature>
<feature type="binding site" evidence="1">
    <location>
        <position position="370"/>
    </location>
    <ligand>
        <name>AMP</name>
        <dbReference type="ChEBI" id="CHEBI:456215"/>
    </ligand>
</feature>
<feature type="binding site" evidence="1">
    <location>
        <position position="386"/>
    </location>
    <ligand>
        <name>AMP</name>
        <dbReference type="ChEBI" id="CHEBI:456215"/>
    </ligand>
</feature>
<feature type="binding site" evidence="1">
    <location>
        <begin position="419"/>
        <end position="423"/>
    </location>
    <ligand>
        <name>beta-D-fructose 1,6-bisphosphate</name>
        <dbReference type="ChEBI" id="CHEBI:32966"/>
    </ligand>
</feature>
<feature type="binding site" evidence="1">
    <location>
        <begin position="429"/>
        <end position="431"/>
    </location>
    <ligand>
        <name>beta-D-fructose 1,6-bisphosphate</name>
        <dbReference type="ChEBI" id="CHEBI:32966"/>
    </ligand>
</feature>
<feature type="site" description="Could play a key role in the communication between the regulatory and the substrate sites" evidence="1">
    <location>
        <position position="74"/>
    </location>
</feature>
<feature type="site" description="Could play a key role in the communication between the regulatory and the substrate sites" evidence="1">
    <location>
        <position position="113"/>
    </location>
</feature>
<organism>
    <name type="scientific">Salmonella arizonae (strain ATCC BAA-731 / CDC346-86 / RSK2980)</name>
    <dbReference type="NCBI Taxonomy" id="41514"/>
    <lineage>
        <taxon>Bacteria</taxon>
        <taxon>Pseudomonadati</taxon>
        <taxon>Pseudomonadota</taxon>
        <taxon>Gammaproteobacteria</taxon>
        <taxon>Enterobacterales</taxon>
        <taxon>Enterobacteriaceae</taxon>
        <taxon>Salmonella</taxon>
    </lineage>
</organism>
<gene>
    <name evidence="1" type="primary">glgC</name>
    <name type="ordered locus">SARI_04092</name>
</gene>
<proteinExistence type="inferred from homology"/>
<sequence>MVSLEKNDRLMLARQLPLKSVALILAGGRGTRLKDLTNKRAKPAVHFGGKFRIIDFALSNCLNSGIRRIGVITQYQSHTLVQHIQRGWSLFSEEMNEFVDLLPAQQRMQGENWYRGTADAVTQNLDIIRRYKAEYVVILAGDHIYKQDYSRMLIDHVEKGARCTVACMPVPIKEATAFGVMAVDESEKIIDFVEKPANPPAMPGDDSKALASMGIYVFDADYLYELLAADDKDDASSHDFGKDIIPKITREGMAYAHPFPLSCVQSDPDAEPYWRDVGTLEAYWKANLDLASVTPELDMYDQNWPIRTHMESLPPAKFVQDRSGSHGMTLNSLVSGGCIISGSVVVQSVLFPRVRINSFCNIDSAVLLPEVWVGRSCRLRRCIIDRACIIPEGMVIGENAEEDARRFYRSEEGIVLVTREMLRKLQVKQER</sequence>
<dbReference type="EC" id="2.7.7.27" evidence="1"/>
<dbReference type="EMBL" id="CP000880">
    <property type="protein sequence ID" value="ABX23881.1"/>
    <property type="molecule type" value="Genomic_DNA"/>
</dbReference>
<dbReference type="SMR" id="A9MMA2"/>
<dbReference type="STRING" id="41514.SARI_04092"/>
<dbReference type="KEGG" id="ses:SARI_04092"/>
<dbReference type="HOGENOM" id="CLU_029499_14_1_6"/>
<dbReference type="UniPathway" id="UPA00164"/>
<dbReference type="Proteomes" id="UP000002084">
    <property type="component" value="Chromosome"/>
</dbReference>
<dbReference type="GO" id="GO:0005524">
    <property type="term" value="F:ATP binding"/>
    <property type="evidence" value="ECO:0007669"/>
    <property type="project" value="UniProtKB-KW"/>
</dbReference>
<dbReference type="GO" id="GO:0008878">
    <property type="term" value="F:glucose-1-phosphate adenylyltransferase activity"/>
    <property type="evidence" value="ECO:0007669"/>
    <property type="project" value="UniProtKB-UniRule"/>
</dbReference>
<dbReference type="GO" id="GO:0005978">
    <property type="term" value="P:glycogen biosynthetic process"/>
    <property type="evidence" value="ECO:0007669"/>
    <property type="project" value="UniProtKB-UniRule"/>
</dbReference>
<dbReference type="CDD" id="cd02508">
    <property type="entry name" value="ADP_Glucose_PP"/>
    <property type="match status" value="1"/>
</dbReference>
<dbReference type="CDD" id="cd04651">
    <property type="entry name" value="LbH_G1P_AT_C"/>
    <property type="match status" value="1"/>
</dbReference>
<dbReference type="FunFam" id="2.160.10.10:FF:000006">
    <property type="entry name" value="Glucose-1-phosphate adenylyltransferase"/>
    <property type="match status" value="1"/>
</dbReference>
<dbReference type="FunFam" id="3.90.550.10:FF:000014">
    <property type="entry name" value="Glucose-1-phosphate adenylyltransferase"/>
    <property type="match status" value="1"/>
</dbReference>
<dbReference type="Gene3D" id="2.160.10.10">
    <property type="entry name" value="Hexapeptide repeat proteins"/>
    <property type="match status" value="1"/>
</dbReference>
<dbReference type="Gene3D" id="3.90.550.10">
    <property type="entry name" value="Spore Coat Polysaccharide Biosynthesis Protein SpsA, Chain A"/>
    <property type="match status" value="1"/>
</dbReference>
<dbReference type="HAMAP" id="MF_00624">
    <property type="entry name" value="GlgC"/>
    <property type="match status" value="1"/>
</dbReference>
<dbReference type="InterPro" id="IPR011831">
    <property type="entry name" value="ADP-Glc_PPase"/>
</dbReference>
<dbReference type="InterPro" id="IPR005836">
    <property type="entry name" value="ADP_Glu_pyroP_CS"/>
</dbReference>
<dbReference type="InterPro" id="IPR023049">
    <property type="entry name" value="GlgC_bac"/>
</dbReference>
<dbReference type="InterPro" id="IPR056818">
    <property type="entry name" value="GlmU/GlgC-like_hexapep"/>
</dbReference>
<dbReference type="InterPro" id="IPR005835">
    <property type="entry name" value="NTP_transferase_dom"/>
</dbReference>
<dbReference type="InterPro" id="IPR029044">
    <property type="entry name" value="Nucleotide-diphossugar_trans"/>
</dbReference>
<dbReference type="InterPro" id="IPR011004">
    <property type="entry name" value="Trimer_LpxA-like_sf"/>
</dbReference>
<dbReference type="NCBIfam" id="TIGR02091">
    <property type="entry name" value="glgC"/>
    <property type="match status" value="1"/>
</dbReference>
<dbReference type="NCBIfam" id="NF001947">
    <property type="entry name" value="PRK00725.1"/>
    <property type="match status" value="1"/>
</dbReference>
<dbReference type="NCBIfam" id="NF002023">
    <property type="entry name" value="PRK00844.1"/>
    <property type="match status" value="1"/>
</dbReference>
<dbReference type="PANTHER" id="PTHR43523:SF2">
    <property type="entry name" value="GLUCOSE-1-PHOSPHATE ADENYLYLTRANSFERASE"/>
    <property type="match status" value="1"/>
</dbReference>
<dbReference type="PANTHER" id="PTHR43523">
    <property type="entry name" value="GLUCOSE-1-PHOSPHATE ADENYLYLTRANSFERASE-RELATED"/>
    <property type="match status" value="1"/>
</dbReference>
<dbReference type="Pfam" id="PF24894">
    <property type="entry name" value="Hexapep_GlmU"/>
    <property type="match status" value="1"/>
</dbReference>
<dbReference type="Pfam" id="PF00483">
    <property type="entry name" value="NTP_transferase"/>
    <property type="match status" value="1"/>
</dbReference>
<dbReference type="SUPFAM" id="SSF53448">
    <property type="entry name" value="Nucleotide-diphospho-sugar transferases"/>
    <property type="match status" value="1"/>
</dbReference>
<dbReference type="SUPFAM" id="SSF51161">
    <property type="entry name" value="Trimeric LpxA-like enzymes"/>
    <property type="match status" value="1"/>
</dbReference>
<dbReference type="PROSITE" id="PS00808">
    <property type="entry name" value="ADP_GLC_PYROPHOSPH_1"/>
    <property type="match status" value="1"/>
</dbReference>
<dbReference type="PROSITE" id="PS00809">
    <property type="entry name" value="ADP_GLC_PYROPHOSPH_2"/>
    <property type="match status" value="1"/>
</dbReference>
<dbReference type="PROSITE" id="PS00810">
    <property type="entry name" value="ADP_GLC_PYROPHOSPH_3"/>
    <property type="match status" value="1"/>
</dbReference>
<name>GLGC_SALAR</name>
<reference key="1">
    <citation type="submission" date="2007-11" db="EMBL/GenBank/DDBJ databases">
        <authorList>
            <consortium name="The Salmonella enterica serovar Arizonae Genome Sequencing Project"/>
            <person name="McClelland M."/>
            <person name="Sanderson E.K."/>
            <person name="Porwollik S."/>
            <person name="Spieth J."/>
            <person name="Clifton W.S."/>
            <person name="Fulton R."/>
            <person name="Chunyan W."/>
            <person name="Wollam A."/>
            <person name="Shah N."/>
            <person name="Pepin K."/>
            <person name="Bhonagiri V."/>
            <person name="Nash W."/>
            <person name="Johnson M."/>
            <person name="Thiruvilangam P."/>
            <person name="Wilson R."/>
        </authorList>
    </citation>
    <scope>NUCLEOTIDE SEQUENCE [LARGE SCALE GENOMIC DNA]</scope>
    <source>
        <strain>ATCC BAA-731 / CDC346-86 / RSK2980</strain>
    </source>
</reference>
<protein>
    <recommendedName>
        <fullName evidence="1">Glucose-1-phosphate adenylyltransferase</fullName>
        <ecNumber evidence="1">2.7.7.27</ecNumber>
    </recommendedName>
    <alternativeName>
        <fullName evidence="1">ADP-glucose pyrophosphorylase</fullName>
        <shortName evidence="1">ADPGlc PPase</shortName>
    </alternativeName>
    <alternativeName>
        <fullName evidence="1">ADP-glucose synthase</fullName>
    </alternativeName>
</protein>
<accession>A9MMA2</accession>
<evidence type="ECO:0000255" key="1">
    <source>
        <dbReference type="HAMAP-Rule" id="MF_00624"/>
    </source>
</evidence>
<keyword id="KW-0021">Allosteric enzyme</keyword>
<keyword id="KW-0067">ATP-binding</keyword>
<keyword id="KW-0119">Carbohydrate metabolism</keyword>
<keyword id="KW-0320">Glycogen biosynthesis</keyword>
<keyword id="KW-0321">Glycogen metabolism</keyword>
<keyword id="KW-0547">Nucleotide-binding</keyword>
<keyword id="KW-0548">Nucleotidyltransferase</keyword>
<keyword id="KW-1185">Reference proteome</keyword>
<keyword id="KW-0808">Transferase</keyword>
<comment type="function">
    <text evidence="1">Involved in the biosynthesis of ADP-glucose, a building block required for the elongation reactions to produce glycogen. Catalyzes the reaction between ATP and alpha-D-glucose 1-phosphate (G1P) to produce pyrophosphate and ADP-Glc.</text>
</comment>
<comment type="catalytic activity">
    <reaction evidence="1">
        <text>alpha-D-glucose 1-phosphate + ATP + H(+) = ADP-alpha-D-glucose + diphosphate</text>
        <dbReference type="Rhea" id="RHEA:12120"/>
        <dbReference type="ChEBI" id="CHEBI:15378"/>
        <dbReference type="ChEBI" id="CHEBI:30616"/>
        <dbReference type="ChEBI" id="CHEBI:33019"/>
        <dbReference type="ChEBI" id="CHEBI:57498"/>
        <dbReference type="ChEBI" id="CHEBI:58601"/>
        <dbReference type="EC" id="2.7.7.27"/>
    </reaction>
</comment>
<comment type="activity regulation">
    <text evidence="1">Allosterically activated by fructose-1,6-bisphosphate (F16BP) and inhibited by AMP.</text>
</comment>
<comment type="pathway">
    <text evidence="1">Glycan biosynthesis; glycogen biosynthesis.</text>
</comment>
<comment type="subunit">
    <text evidence="1">Homotetramer.</text>
</comment>
<comment type="similarity">
    <text evidence="1">Belongs to the bacterial/plant glucose-1-phosphate adenylyltransferase family.</text>
</comment>